<keyword id="KW-0238">DNA-binding</keyword>
<keyword id="KW-0479">Metal-binding</keyword>
<keyword id="KW-0539">Nucleus</keyword>
<keyword id="KW-0675">Receptor</keyword>
<keyword id="KW-1185">Reference proteome</keyword>
<keyword id="KW-0804">Transcription</keyword>
<keyword id="KW-0805">Transcription regulation</keyword>
<keyword id="KW-0862">Zinc</keyword>
<keyword id="KW-0863">Zinc-finger</keyword>
<gene>
    <name type="primary">nhr-125</name>
    <name type="ORF">R02D1.1</name>
</gene>
<proteinExistence type="inferred from homology"/>
<accession>O17082</accession>
<comment type="function">
    <text>Orphan nuclear receptor.</text>
</comment>
<comment type="subcellular location">
    <subcellularLocation>
        <location evidence="1">Nucleus</location>
    </subcellularLocation>
</comment>
<comment type="similarity">
    <text evidence="3">Belongs to the nuclear hormone receptor family.</text>
</comment>
<name>NH125_CAEEL</name>
<dbReference type="EMBL" id="FO081013">
    <property type="protein sequence ID" value="CCD68492.1"/>
    <property type="molecule type" value="Genomic_DNA"/>
</dbReference>
<dbReference type="PIR" id="B89024">
    <property type="entry name" value="B89024"/>
</dbReference>
<dbReference type="PIR" id="T37257">
    <property type="entry name" value="T37257"/>
</dbReference>
<dbReference type="RefSeq" id="NP_504194.2">
    <property type="nucleotide sequence ID" value="NM_071793.5"/>
</dbReference>
<dbReference type="FunCoup" id="O17082">
    <property type="interactions" value="84"/>
</dbReference>
<dbReference type="STRING" id="6239.R02D1.1a.1"/>
<dbReference type="PaxDb" id="6239-R02D1.1"/>
<dbReference type="EnsemblMetazoa" id="R02D1.1a.1">
    <property type="protein sequence ID" value="R02D1.1a.1"/>
    <property type="gene ID" value="WBGene00003715"/>
</dbReference>
<dbReference type="GeneID" id="187520"/>
<dbReference type="KEGG" id="cel:CELE_R02D1.1"/>
<dbReference type="UCSC" id="R02D1.1">
    <property type="organism name" value="c. elegans"/>
</dbReference>
<dbReference type="AGR" id="WB:WBGene00003715"/>
<dbReference type="CTD" id="187520"/>
<dbReference type="WormBase" id="R02D1.1a">
    <property type="protein sequence ID" value="CE30823"/>
    <property type="gene ID" value="WBGene00003715"/>
    <property type="gene designation" value="nhr-125"/>
</dbReference>
<dbReference type="eggNOG" id="KOG3575">
    <property type="taxonomic scope" value="Eukaryota"/>
</dbReference>
<dbReference type="GeneTree" id="ENSGT00970000195869"/>
<dbReference type="HOGENOM" id="CLU_007368_7_1_1"/>
<dbReference type="InParanoid" id="O17082"/>
<dbReference type="OrthoDB" id="6355676at2759"/>
<dbReference type="PhylomeDB" id="O17082"/>
<dbReference type="PRO" id="PR:O17082"/>
<dbReference type="Proteomes" id="UP000001940">
    <property type="component" value="Chromosome V"/>
</dbReference>
<dbReference type="Bgee" id="WBGene00003715">
    <property type="expression patterns" value="Expressed in pharyngeal muscle cell (C elegans) and 3 other cell types or tissues"/>
</dbReference>
<dbReference type="ExpressionAtlas" id="O17082">
    <property type="expression patterns" value="baseline and differential"/>
</dbReference>
<dbReference type="GO" id="GO:0005634">
    <property type="term" value="C:nucleus"/>
    <property type="evidence" value="ECO:0007669"/>
    <property type="project" value="UniProtKB-SubCell"/>
</dbReference>
<dbReference type="GO" id="GO:0003700">
    <property type="term" value="F:DNA-binding transcription factor activity"/>
    <property type="evidence" value="ECO:0007669"/>
    <property type="project" value="InterPro"/>
</dbReference>
<dbReference type="GO" id="GO:0043565">
    <property type="term" value="F:sequence-specific DNA binding"/>
    <property type="evidence" value="ECO:0007669"/>
    <property type="project" value="InterPro"/>
</dbReference>
<dbReference type="GO" id="GO:0008270">
    <property type="term" value="F:zinc ion binding"/>
    <property type="evidence" value="ECO:0007669"/>
    <property type="project" value="UniProtKB-KW"/>
</dbReference>
<dbReference type="Gene3D" id="3.30.50.10">
    <property type="entry name" value="Erythroid Transcription Factor GATA-1, subunit A"/>
    <property type="match status" value="1"/>
</dbReference>
<dbReference type="Gene3D" id="1.10.565.10">
    <property type="entry name" value="Retinoid X Receptor"/>
    <property type="match status" value="1"/>
</dbReference>
<dbReference type="InterPro" id="IPR051152">
    <property type="entry name" value="C.elegans_Orphan_NR"/>
</dbReference>
<dbReference type="InterPro" id="IPR035500">
    <property type="entry name" value="NHR-like_dom_sf"/>
</dbReference>
<dbReference type="InterPro" id="IPR000536">
    <property type="entry name" value="Nucl_hrmn_rcpt_lig-bd"/>
</dbReference>
<dbReference type="InterPro" id="IPR001628">
    <property type="entry name" value="Znf_hrmn_rcpt"/>
</dbReference>
<dbReference type="InterPro" id="IPR013088">
    <property type="entry name" value="Znf_NHR/GATA"/>
</dbReference>
<dbReference type="PANTHER" id="PTHR45680:SF32">
    <property type="entry name" value="NR LBD DOMAIN-CONTAINING PROTEIN-RELATED"/>
    <property type="match status" value="1"/>
</dbReference>
<dbReference type="PANTHER" id="PTHR45680">
    <property type="entry name" value="NUCLEAR HORMONE RECEPTOR FAMILY"/>
    <property type="match status" value="1"/>
</dbReference>
<dbReference type="Pfam" id="PF00104">
    <property type="entry name" value="Hormone_recep"/>
    <property type="match status" value="1"/>
</dbReference>
<dbReference type="Pfam" id="PF00105">
    <property type="entry name" value="zf-C4"/>
    <property type="match status" value="1"/>
</dbReference>
<dbReference type="PRINTS" id="PR00047">
    <property type="entry name" value="STROIDFINGER"/>
</dbReference>
<dbReference type="SMART" id="SM00430">
    <property type="entry name" value="HOLI"/>
    <property type="match status" value="1"/>
</dbReference>
<dbReference type="SMART" id="SM00399">
    <property type="entry name" value="ZnF_C4"/>
    <property type="match status" value="1"/>
</dbReference>
<dbReference type="SUPFAM" id="SSF57716">
    <property type="entry name" value="Glucocorticoid receptor-like (DNA-binding domain)"/>
    <property type="match status" value="1"/>
</dbReference>
<dbReference type="SUPFAM" id="SSF48508">
    <property type="entry name" value="Nuclear receptor ligand-binding domain"/>
    <property type="match status" value="1"/>
</dbReference>
<dbReference type="PROSITE" id="PS51843">
    <property type="entry name" value="NR_LBD"/>
    <property type="match status" value="1"/>
</dbReference>
<dbReference type="PROSITE" id="PS00031">
    <property type="entry name" value="NUCLEAR_REC_DBD_1"/>
    <property type="match status" value="1"/>
</dbReference>
<dbReference type="PROSITE" id="PS51030">
    <property type="entry name" value="NUCLEAR_REC_DBD_2"/>
    <property type="match status" value="1"/>
</dbReference>
<organism>
    <name type="scientific">Caenorhabditis elegans</name>
    <dbReference type="NCBI Taxonomy" id="6239"/>
    <lineage>
        <taxon>Eukaryota</taxon>
        <taxon>Metazoa</taxon>
        <taxon>Ecdysozoa</taxon>
        <taxon>Nematoda</taxon>
        <taxon>Chromadorea</taxon>
        <taxon>Rhabditida</taxon>
        <taxon>Rhabditina</taxon>
        <taxon>Rhabditomorpha</taxon>
        <taxon>Rhabditoidea</taxon>
        <taxon>Rhabditidae</taxon>
        <taxon>Peloderinae</taxon>
        <taxon>Caenorhabditis</taxon>
    </lineage>
</organism>
<evidence type="ECO:0000255" key="1">
    <source>
        <dbReference type="PROSITE-ProRule" id="PRU00407"/>
    </source>
</evidence>
<evidence type="ECO:0000255" key="2">
    <source>
        <dbReference type="PROSITE-ProRule" id="PRU01189"/>
    </source>
</evidence>
<evidence type="ECO:0000305" key="3"/>
<reference key="1">
    <citation type="journal article" date="1998" name="Science">
        <title>Genome sequence of the nematode C. elegans: a platform for investigating biology.</title>
        <authorList>
            <consortium name="The C. elegans sequencing consortium"/>
        </authorList>
    </citation>
    <scope>NUCLEOTIDE SEQUENCE [LARGE SCALE GENOMIC DNA]</scope>
    <source>
        <strain>Bristol N2</strain>
    </source>
</reference>
<feature type="chain" id="PRO_0000223592" description="Nuclear hormone receptor family member nhr-125">
    <location>
        <begin position="1"/>
        <end position="399"/>
    </location>
</feature>
<feature type="domain" description="NR LBD" evidence="2">
    <location>
        <begin position="149"/>
        <end position="392"/>
    </location>
</feature>
<feature type="DNA-binding region" description="Nuclear receptor" evidence="1">
    <location>
        <begin position="10"/>
        <end position="80"/>
    </location>
</feature>
<feature type="zinc finger region" description="NR C4-type" evidence="1">
    <location>
        <begin position="13"/>
        <end position="33"/>
    </location>
</feature>
<feature type="zinc finger region" description="NR C4-type" evidence="1">
    <location>
        <begin position="50"/>
        <end position="63"/>
    </location>
</feature>
<protein>
    <recommendedName>
        <fullName>Nuclear hormone receptor family member nhr-125</fullName>
    </recommendedName>
</protein>
<sequence length="399" mass="46533">MDLVSTSTSPFSCRICNQKAHGNHFGVLTCRACASFFRRAAFSKWSQLKCQKGGCSRNFCKRCRLKKCREMGMDTTKFQYNRDSFRATGQFQLPPPRSLASFVGRPELFLFCDTEAPNAKMLIDVRYLLEEAGRIINQGYETPASGKNQLENLTEGFKYIKVDMNNISSSKYASKDAIISMWEYYFFTVTRWLMYFEGFQKLNSHTQITLIQSVWNVWSRLHKYVATVDYHKANPDTLPTNVVIHNTLVDIENVEFDSTWLSDYPVEHVRRYLSVQHCREFDILGTLRKLNPSELEITYLFAQICFEHAGKRNQGDIMKVTEQFLDSLANDLHDYYVNEMNNSRYFLRLTQLLKINQAIQFSDISPQKQIRNNIIKKEAEKLEKLQKSQFSIKRLSISN</sequence>